<feature type="chain" id="PRO_0000119809" description="Cullin-3">
    <location>
        <begin position="1"/>
        <end position="785"/>
    </location>
</feature>
<feature type="domain" description="Cullin neddylation" evidence="4">
    <location>
        <begin position="715"/>
        <end position="777"/>
    </location>
</feature>
<feature type="cross-link" description="Glycyl lysine isopeptide (Lys-Gly) (interchain with G-Cter in NEDD8)" evidence="3">
    <location>
        <position position="729"/>
    </location>
</feature>
<feature type="mutagenesis site" description="Reduced btb3 binding and ubiquitination." evidence="6">
    <original>Y</original>
    <variation>G</variation>
    <location>
        <position position="50"/>
    </location>
</feature>
<feature type="mutagenesis site" description="No cross-link with NEDD8." evidence="6">
    <original>K</original>
    <variation>R</variation>
    <location>
        <position position="729"/>
    </location>
</feature>
<feature type="sequence conflict" description="In Ref. 2; BAA32519." evidence="8" ref="2">
    <original>R</original>
    <variation>RYALIVFTVFNTFR</variation>
    <location>
        <position position="476"/>
    </location>
</feature>
<accession>Q09760</accession>
<accession>O74185</accession>
<proteinExistence type="evidence at protein level"/>
<protein>
    <recommendedName>
        <fullName>Cullin-3</fullName>
        <shortName>Cul-3</shortName>
    </recommendedName>
</protein>
<keyword id="KW-0963">Cytoplasm</keyword>
<keyword id="KW-1017">Isopeptide bond</keyword>
<keyword id="KW-1185">Reference proteome</keyword>
<keyword id="KW-0832">Ubl conjugation</keyword>
<keyword id="KW-0833">Ubl conjugation pathway</keyword>
<gene>
    <name type="primary">cul3</name>
    <name type="synonym">pcu3</name>
    <name type="ORF">SPAC24H6.03</name>
</gene>
<reference key="1">
    <citation type="journal article" date="2002" name="Nature">
        <title>The genome sequence of Schizosaccharomyces pombe.</title>
        <authorList>
            <person name="Wood V."/>
            <person name="Gwilliam R."/>
            <person name="Rajandream M.A."/>
            <person name="Lyne M.H."/>
            <person name="Lyne R."/>
            <person name="Stewart A."/>
            <person name="Sgouros J.G."/>
            <person name="Peat N."/>
            <person name="Hayles J."/>
            <person name="Baker S.G."/>
            <person name="Basham D."/>
            <person name="Bowman S."/>
            <person name="Brooks K."/>
            <person name="Brown D."/>
            <person name="Brown S."/>
            <person name="Chillingworth T."/>
            <person name="Churcher C.M."/>
            <person name="Collins M."/>
            <person name="Connor R."/>
            <person name="Cronin A."/>
            <person name="Davis P."/>
            <person name="Feltwell T."/>
            <person name="Fraser A."/>
            <person name="Gentles S."/>
            <person name="Goble A."/>
            <person name="Hamlin N."/>
            <person name="Harris D.E."/>
            <person name="Hidalgo J."/>
            <person name="Hodgson G."/>
            <person name="Holroyd S."/>
            <person name="Hornsby T."/>
            <person name="Howarth S."/>
            <person name="Huckle E.J."/>
            <person name="Hunt S."/>
            <person name="Jagels K."/>
            <person name="James K.D."/>
            <person name="Jones L."/>
            <person name="Jones M."/>
            <person name="Leather S."/>
            <person name="McDonald S."/>
            <person name="McLean J."/>
            <person name="Mooney P."/>
            <person name="Moule S."/>
            <person name="Mungall K.L."/>
            <person name="Murphy L.D."/>
            <person name="Niblett D."/>
            <person name="Odell C."/>
            <person name="Oliver K."/>
            <person name="O'Neil S."/>
            <person name="Pearson D."/>
            <person name="Quail M.A."/>
            <person name="Rabbinowitsch E."/>
            <person name="Rutherford K.M."/>
            <person name="Rutter S."/>
            <person name="Saunders D."/>
            <person name="Seeger K."/>
            <person name="Sharp S."/>
            <person name="Skelton J."/>
            <person name="Simmonds M.N."/>
            <person name="Squares R."/>
            <person name="Squares S."/>
            <person name="Stevens K."/>
            <person name="Taylor K."/>
            <person name="Taylor R.G."/>
            <person name="Tivey A."/>
            <person name="Walsh S.V."/>
            <person name="Warren T."/>
            <person name="Whitehead S."/>
            <person name="Woodward J.R."/>
            <person name="Volckaert G."/>
            <person name="Aert R."/>
            <person name="Robben J."/>
            <person name="Grymonprez B."/>
            <person name="Weltjens I."/>
            <person name="Vanstreels E."/>
            <person name="Rieger M."/>
            <person name="Schaefer M."/>
            <person name="Mueller-Auer S."/>
            <person name="Gabel C."/>
            <person name="Fuchs M."/>
            <person name="Duesterhoeft A."/>
            <person name="Fritzc C."/>
            <person name="Holzer E."/>
            <person name="Moestl D."/>
            <person name="Hilbert H."/>
            <person name="Borzym K."/>
            <person name="Langer I."/>
            <person name="Beck A."/>
            <person name="Lehrach H."/>
            <person name="Reinhardt R."/>
            <person name="Pohl T.M."/>
            <person name="Eger P."/>
            <person name="Zimmermann W."/>
            <person name="Wedler H."/>
            <person name="Wambutt R."/>
            <person name="Purnelle B."/>
            <person name="Goffeau A."/>
            <person name="Cadieu E."/>
            <person name="Dreano S."/>
            <person name="Gloux S."/>
            <person name="Lelaure V."/>
            <person name="Mottier S."/>
            <person name="Galibert F."/>
            <person name="Aves S.J."/>
            <person name="Xiang Z."/>
            <person name="Hunt C."/>
            <person name="Moore K."/>
            <person name="Hurst S.M."/>
            <person name="Lucas M."/>
            <person name="Rochet M."/>
            <person name="Gaillardin C."/>
            <person name="Tallada V.A."/>
            <person name="Garzon A."/>
            <person name="Thode G."/>
            <person name="Daga R.R."/>
            <person name="Cruzado L."/>
            <person name="Jimenez J."/>
            <person name="Sanchez M."/>
            <person name="del Rey F."/>
            <person name="Benito J."/>
            <person name="Dominguez A."/>
            <person name="Revuelta J.L."/>
            <person name="Moreno S."/>
            <person name="Armstrong J."/>
            <person name="Forsburg S.L."/>
            <person name="Cerutti L."/>
            <person name="Lowe T."/>
            <person name="McCombie W.R."/>
            <person name="Paulsen I."/>
            <person name="Potashkin J."/>
            <person name="Shpakovski G.V."/>
            <person name="Ussery D."/>
            <person name="Barrell B.G."/>
            <person name="Nurse P."/>
        </authorList>
    </citation>
    <scope>NUCLEOTIDE SEQUENCE [LARGE SCALE GENOMIC DNA]</scope>
    <source>
        <strain>972 / ATCC 24843</strain>
    </source>
</reference>
<reference key="2">
    <citation type="submission" date="1998-08" db="EMBL/GenBank/DDBJ databases">
        <authorList>
            <person name="Kominami K."/>
            <person name="Toda T."/>
        </authorList>
    </citation>
    <scope>NUCLEOTIDE SEQUENCE [GENOMIC DNA] OF 136-543</scope>
</reference>
<reference key="3">
    <citation type="journal article" date="2003" name="Mol. Cell">
        <title>BTB/POZ domain proteins are putative substrate adaptors for cullin 3 ubiquitin ligases.</title>
        <authorList>
            <person name="Geyer R."/>
            <person name="Wee S."/>
            <person name="Anderson S."/>
            <person name="Yates J. III"/>
            <person name="Wolf D.A."/>
        </authorList>
    </citation>
    <scope>FUNCTION</scope>
    <scope>INTERACTION WITH BTB1; BTB2; BTB3; NEDD8 AND PIP1</scope>
    <scope>MUTAGENESIS OF TYR-50 AND LYS-729</scope>
</reference>
<reference key="4">
    <citation type="journal article" date="2006" name="Nat. Biotechnol.">
        <title>ORFeome cloning and global analysis of protein localization in the fission yeast Schizosaccharomyces pombe.</title>
        <authorList>
            <person name="Matsuyama A."/>
            <person name="Arai R."/>
            <person name="Yashiroda Y."/>
            <person name="Shirai A."/>
            <person name="Kamata A."/>
            <person name="Sekido S."/>
            <person name="Kobayashi Y."/>
            <person name="Hashimoto A."/>
            <person name="Hamamoto M."/>
            <person name="Hiraoka Y."/>
            <person name="Horinouchi S."/>
            <person name="Yoshida M."/>
        </authorList>
    </citation>
    <scope>SUBCELLULAR LOCATION [LARGE SCALE ANALYSIS]</scope>
</reference>
<organism>
    <name type="scientific">Schizosaccharomyces pombe (strain 972 / ATCC 24843)</name>
    <name type="common">Fission yeast</name>
    <dbReference type="NCBI Taxonomy" id="284812"/>
    <lineage>
        <taxon>Eukaryota</taxon>
        <taxon>Fungi</taxon>
        <taxon>Dikarya</taxon>
        <taxon>Ascomycota</taxon>
        <taxon>Taphrinomycotina</taxon>
        <taxon>Schizosaccharomycetes</taxon>
        <taxon>Schizosaccharomycetales</taxon>
        <taxon>Schizosaccharomycetaceae</taxon>
        <taxon>Schizosaccharomyces</taxon>
    </lineage>
</organism>
<comment type="function">
    <text evidence="1 6">Probable core component of multiple cullin-RING-based BC3B (BTB-CUL3-BTB) E3 ubiquitin-protein ligase complexes which mediate the ubiquitination and subsequent proteasomal degradation of target proteins. As a scaffold protein may contribute to catalysis through positioning of the substrate and the ubiquitin-conjugating enzyme. The functional specificity of the BC3B complex depends on the substrate recognition component (By similarity). Involved in ubiquitin-mediated degradation of btb3.</text>
</comment>
<comment type="pathway">
    <text>Protein modification; protein ubiquitination.</text>
</comment>
<comment type="subunit">
    <text evidence="1 6">Probable component of multiple cullin-RING-based BC3B (BTB-CUL3-BTB) E3 ubiquitin-protein ligase complexes formed by cul-3, rbx-1 and a variable BTB domain-containing protein as adapter and substrate recognition component (By similarity). Interacts with btb1, btb2, btb3, nedd8 and pip1.</text>
</comment>
<comment type="interaction">
    <interactant intactId="EBI-3647930">
        <id>Q09760</id>
    </interactant>
    <interactant intactId="EBI-3647943">
        <id>O74881</id>
        <label>btb1</label>
    </interactant>
    <organismsDiffer>false</organismsDiffer>
    <experiments>3</experiments>
</comment>
<comment type="interaction">
    <interactant intactId="EBI-3647930">
        <id>Q09760</id>
    </interactant>
    <interactant intactId="EBI-3648173">
        <id>O74778</id>
        <label>btb2</label>
    </interactant>
    <organismsDiffer>false</organismsDiffer>
    <experiments>2</experiments>
</comment>
<comment type="interaction">
    <interactant intactId="EBI-3647930">
        <id>Q09760</id>
    </interactant>
    <interactant intactId="EBI-3648208">
        <id>Q10225</id>
        <label>btb3</label>
    </interactant>
    <organismsDiffer>false</organismsDiffer>
    <experiments>4</experiments>
</comment>
<comment type="subcellular location">
    <subcellularLocation>
        <location evidence="7">Cytoplasm</location>
    </subcellularLocation>
</comment>
<comment type="PTM">
    <text evidence="2">Neddylated; enhancing the ubiquitin-ligase activity.</text>
</comment>
<comment type="similarity">
    <text evidence="5">Belongs to the cullin family.</text>
</comment>
<comment type="sequence caution" evidence="8">
    <conflict type="frameshift">
        <sequence resource="EMBL-CDS" id="BAA32519"/>
    </conflict>
</comment>
<name>CUL3_SCHPO</name>
<dbReference type="EMBL" id="CU329670">
    <property type="protein sequence ID" value="CAA90847.1"/>
    <property type="molecule type" value="Genomic_DNA"/>
</dbReference>
<dbReference type="EMBL" id="AB017028">
    <property type="protein sequence ID" value="BAA32519.1"/>
    <property type="status" value="ALT_FRAME"/>
    <property type="molecule type" value="Genomic_DNA"/>
</dbReference>
<dbReference type="PIR" id="S62405">
    <property type="entry name" value="S62405"/>
</dbReference>
<dbReference type="PIR" id="T38359">
    <property type="entry name" value="T38359"/>
</dbReference>
<dbReference type="PIR" id="T43406">
    <property type="entry name" value="T43406"/>
</dbReference>
<dbReference type="RefSeq" id="NP_592949.1">
    <property type="nucleotide sequence ID" value="NM_001018350.2"/>
</dbReference>
<dbReference type="SMR" id="Q09760"/>
<dbReference type="BioGRID" id="279091">
    <property type="interactions" value="21"/>
</dbReference>
<dbReference type="FunCoup" id="Q09760">
    <property type="interactions" value="652"/>
</dbReference>
<dbReference type="IntAct" id="Q09760">
    <property type="interactions" value="14"/>
</dbReference>
<dbReference type="STRING" id="284812.Q09760"/>
<dbReference type="iPTMnet" id="Q09760"/>
<dbReference type="PaxDb" id="4896-SPAC24H6.03.1"/>
<dbReference type="EnsemblFungi" id="SPAC24H6.03.1">
    <property type="protein sequence ID" value="SPAC24H6.03.1:pep"/>
    <property type="gene ID" value="SPAC24H6.03"/>
</dbReference>
<dbReference type="GeneID" id="2542637"/>
<dbReference type="KEGG" id="spo:2542637"/>
<dbReference type="PomBase" id="SPAC24H6.03">
    <property type="gene designation" value="cul3"/>
</dbReference>
<dbReference type="VEuPathDB" id="FungiDB:SPAC24H6.03"/>
<dbReference type="eggNOG" id="KOG2166">
    <property type="taxonomic scope" value="Eukaryota"/>
</dbReference>
<dbReference type="HOGENOM" id="CLU_004747_7_1_1"/>
<dbReference type="InParanoid" id="Q09760"/>
<dbReference type="OMA" id="MFKDMTI"/>
<dbReference type="PhylomeDB" id="Q09760"/>
<dbReference type="Reactome" id="R-SPO-8951664">
    <property type="pathway name" value="Neddylation"/>
</dbReference>
<dbReference type="Reactome" id="R-SPO-983168">
    <property type="pathway name" value="Antigen processing: Ubiquitination &amp; Proteasome degradation"/>
</dbReference>
<dbReference type="UniPathway" id="UPA00143"/>
<dbReference type="PRO" id="PR:Q09760"/>
<dbReference type="Proteomes" id="UP000002485">
    <property type="component" value="Chromosome I"/>
</dbReference>
<dbReference type="GO" id="GO:0031463">
    <property type="term" value="C:Cul3-RING ubiquitin ligase complex"/>
    <property type="evidence" value="ECO:0000318"/>
    <property type="project" value="GO_Central"/>
</dbReference>
<dbReference type="GO" id="GO:0005829">
    <property type="term" value="C:cytosol"/>
    <property type="evidence" value="ECO:0007005"/>
    <property type="project" value="PomBase"/>
</dbReference>
<dbReference type="GO" id="GO:0031625">
    <property type="term" value="F:ubiquitin protein ligase binding"/>
    <property type="evidence" value="ECO:0000318"/>
    <property type="project" value="GO_Central"/>
</dbReference>
<dbReference type="GO" id="GO:0043161">
    <property type="term" value="P:proteasome-mediated ubiquitin-dependent protein catabolic process"/>
    <property type="evidence" value="ECO:0000305"/>
    <property type="project" value="PomBase"/>
</dbReference>
<dbReference type="GO" id="GO:0016567">
    <property type="term" value="P:protein ubiquitination"/>
    <property type="evidence" value="ECO:0000318"/>
    <property type="project" value="GO_Central"/>
</dbReference>
<dbReference type="FunFam" id="1.10.10.10:FF:000014">
    <property type="entry name" value="Cullin 1"/>
    <property type="match status" value="1"/>
</dbReference>
<dbReference type="FunFam" id="1.20.1310.10:FF:000001">
    <property type="entry name" value="Cullin 3"/>
    <property type="match status" value="1"/>
</dbReference>
<dbReference type="FunFam" id="1.20.1310.10:FF:000002">
    <property type="entry name" value="cullin-3 isoform X1"/>
    <property type="match status" value="1"/>
</dbReference>
<dbReference type="FunFam" id="3.30.230.130:FF:000011">
    <property type="entry name" value="SCF ubiquitin ligase subunit CulC, putative"/>
    <property type="match status" value="1"/>
</dbReference>
<dbReference type="Gene3D" id="1.20.1310.10">
    <property type="entry name" value="Cullin Repeats"/>
    <property type="match status" value="4"/>
</dbReference>
<dbReference type="Gene3D" id="3.30.230.130">
    <property type="entry name" value="Cullin, Chain C, Domain 2"/>
    <property type="match status" value="1"/>
</dbReference>
<dbReference type="Gene3D" id="1.10.10.10">
    <property type="entry name" value="Winged helix-like DNA-binding domain superfamily/Winged helix DNA-binding domain"/>
    <property type="match status" value="1"/>
</dbReference>
<dbReference type="InterPro" id="IPR045093">
    <property type="entry name" value="Cullin"/>
</dbReference>
<dbReference type="InterPro" id="IPR016157">
    <property type="entry name" value="Cullin_CS"/>
</dbReference>
<dbReference type="InterPro" id="IPR016158">
    <property type="entry name" value="Cullin_homology"/>
</dbReference>
<dbReference type="InterPro" id="IPR036317">
    <property type="entry name" value="Cullin_homology_sf"/>
</dbReference>
<dbReference type="InterPro" id="IPR001373">
    <property type="entry name" value="Cullin_N"/>
</dbReference>
<dbReference type="InterPro" id="IPR019559">
    <property type="entry name" value="Cullin_neddylation_domain"/>
</dbReference>
<dbReference type="InterPro" id="IPR016159">
    <property type="entry name" value="Cullin_repeat-like_dom_sf"/>
</dbReference>
<dbReference type="InterPro" id="IPR036388">
    <property type="entry name" value="WH-like_DNA-bd_sf"/>
</dbReference>
<dbReference type="InterPro" id="IPR036390">
    <property type="entry name" value="WH_DNA-bd_sf"/>
</dbReference>
<dbReference type="PANTHER" id="PTHR11932">
    <property type="entry name" value="CULLIN"/>
    <property type="match status" value="1"/>
</dbReference>
<dbReference type="Pfam" id="PF00888">
    <property type="entry name" value="Cullin"/>
    <property type="match status" value="1"/>
</dbReference>
<dbReference type="Pfam" id="PF10557">
    <property type="entry name" value="Cullin_Nedd8"/>
    <property type="match status" value="1"/>
</dbReference>
<dbReference type="SMART" id="SM00182">
    <property type="entry name" value="CULLIN"/>
    <property type="match status" value="1"/>
</dbReference>
<dbReference type="SMART" id="SM00884">
    <property type="entry name" value="Cullin_Nedd8"/>
    <property type="match status" value="1"/>
</dbReference>
<dbReference type="SUPFAM" id="SSF75632">
    <property type="entry name" value="Cullin homology domain"/>
    <property type="match status" value="1"/>
</dbReference>
<dbReference type="SUPFAM" id="SSF74788">
    <property type="entry name" value="Cullin repeat-like"/>
    <property type="match status" value="1"/>
</dbReference>
<dbReference type="SUPFAM" id="SSF46785">
    <property type="entry name" value="Winged helix' DNA-binding domain"/>
    <property type="match status" value="1"/>
</dbReference>
<dbReference type="PROSITE" id="PS01256">
    <property type="entry name" value="CULLIN_1"/>
    <property type="match status" value="1"/>
</dbReference>
<dbReference type="PROSITE" id="PS50069">
    <property type="entry name" value="CULLIN_2"/>
    <property type="match status" value="2"/>
</dbReference>
<sequence>MQRSAKLKIRAPRKFSANQVDFATHWEVLQRAIGDIFQKSTSQLSFEELYRNAYILVLHKYGEKLYNHVQDVIRSRLKEETVPAIYKNYDASLLGNALLDIRKNDSYSTSWSRSLEAAHRFLSSLVNSWKDHIVSMQMISSVLKYLDKVYSKSADKVPVNENGIYIFREVVLLNSFEIGEKCVETILILVYLERKGNTINRPLINDCLDMLNSLPSENKKETLYDVLFAPKFLSYTRNFYEIESSTVIGVFGVVEYLKKAEKRFEEEKERSKNYLFTKIASPLLSVVEDELLSKHLDDLLENQSTGFFSMIDSSNFEGLQLVYESFSRVELGVKSLKKYLAKYVAHHGKLINETTSQALEGKMAVGRLSSNATMATLWVQKVLALWDRLNTIISTTMDADRSILNSLSDAFVTFVDGYTRAPEYISLFIDDNLKKDARKAIEGSIEATLQNSVTLFRFISEKDVFEKYYKTHLAKRLLNNRSISSDAELGMISRLKQEAGNVFTQKLEGMFNDMNLSQELLQEYKHNSALQSAKPALDLNVSILASTFWPIDLSPHKIKCNFPKVLLAQIDQFTDFYLSKHTGRKLLWYPSMGSADVRVNFKDRKYDLNVSTIASVILLLFQDLKENQCLIFEEILEKTNIEVGDLKRNLQSLACAKYKILLKDPKGREVNAGDKFYFNENFVSNLARIKISTVAQTRVEDDSERKRTLEKVDESRKHQADACIVRVMKDRKVCEHNQLMAEVTRQLNPRFHPSPMMIKRRIEALIEREYLQRQADNGRIYEYLA</sequence>
<evidence type="ECO:0000250" key="1"/>
<evidence type="ECO:0000250" key="2">
    <source>
        <dbReference type="UniProtKB" id="P47050"/>
    </source>
</evidence>
<evidence type="ECO:0000250" key="3">
    <source>
        <dbReference type="UniProtKB" id="Q13616"/>
    </source>
</evidence>
<evidence type="ECO:0000255" key="4"/>
<evidence type="ECO:0000255" key="5">
    <source>
        <dbReference type="PROSITE-ProRule" id="PRU00330"/>
    </source>
</evidence>
<evidence type="ECO:0000269" key="6">
    <source>
    </source>
</evidence>
<evidence type="ECO:0000269" key="7">
    <source>
    </source>
</evidence>
<evidence type="ECO:0000305" key="8"/>